<reference key="1">
    <citation type="journal article" date="2002" name="Nature">
        <title>The genome sequence of Schizosaccharomyces pombe.</title>
        <authorList>
            <person name="Wood V."/>
            <person name="Gwilliam R."/>
            <person name="Rajandream M.A."/>
            <person name="Lyne M.H."/>
            <person name="Lyne R."/>
            <person name="Stewart A."/>
            <person name="Sgouros J.G."/>
            <person name="Peat N."/>
            <person name="Hayles J."/>
            <person name="Baker S.G."/>
            <person name="Basham D."/>
            <person name="Bowman S."/>
            <person name="Brooks K."/>
            <person name="Brown D."/>
            <person name="Brown S."/>
            <person name="Chillingworth T."/>
            <person name="Churcher C.M."/>
            <person name="Collins M."/>
            <person name="Connor R."/>
            <person name="Cronin A."/>
            <person name="Davis P."/>
            <person name="Feltwell T."/>
            <person name="Fraser A."/>
            <person name="Gentles S."/>
            <person name="Goble A."/>
            <person name="Hamlin N."/>
            <person name="Harris D.E."/>
            <person name="Hidalgo J."/>
            <person name="Hodgson G."/>
            <person name="Holroyd S."/>
            <person name="Hornsby T."/>
            <person name="Howarth S."/>
            <person name="Huckle E.J."/>
            <person name="Hunt S."/>
            <person name="Jagels K."/>
            <person name="James K.D."/>
            <person name="Jones L."/>
            <person name="Jones M."/>
            <person name="Leather S."/>
            <person name="McDonald S."/>
            <person name="McLean J."/>
            <person name="Mooney P."/>
            <person name="Moule S."/>
            <person name="Mungall K.L."/>
            <person name="Murphy L.D."/>
            <person name="Niblett D."/>
            <person name="Odell C."/>
            <person name="Oliver K."/>
            <person name="O'Neil S."/>
            <person name="Pearson D."/>
            <person name="Quail M.A."/>
            <person name="Rabbinowitsch E."/>
            <person name="Rutherford K.M."/>
            <person name="Rutter S."/>
            <person name="Saunders D."/>
            <person name="Seeger K."/>
            <person name="Sharp S."/>
            <person name="Skelton J."/>
            <person name="Simmonds M.N."/>
            <person name="Squares R."/>
            <person name="Squares S."/>
            <person name="Stevens K."/>
            <person name="Taylor K."/>
            <person name="Taylor R.G."/>
            <person name="Tivey A."/>
            <person name="Walsh S.V."/>
            <person name="Warren T."/>
            <person name="Whitehead S."/>
            <person name="Woodward J.R."/>
            <person name="Volckaert G."/>
            <person name="Aert R."/>
            <person name="Robben J."/>
            <person name="Grymonprez B."/>
            <person name="Weltjens I."/>
            <person name="Vanstreels E."/>
            <person name="Rieger M."/>
            <person name="Schaefer M."/>
            <person name="Mueller-Auer S."/>
            <person name="Gabel C."/>
            <person name="Fuchs M."/>
            <person name="Duesterhoeft A."/>
            <person name="Fritzc C."/>
            <person name="Holzer E."/>
            <person name="Moestl D."/>
            <person name="Hilbert H."/>
            <person name="Borzym K."/>
            <person name="Langer I."/>
            <person name="Beck A."/>
            <person name="Lehrach H."/>
            <person name="Reinhardt R."/>
            <person name="Pohl T.M."/>
            <person name="Eger P."/>
            <person name="Zimmermann W."/>
            <person name="Wedler H."/>
            <person name="Wambutt R."/>
            <person name="Purnelle B."/>
            <person name="Goffeau A."/>
            <person name="Cadieu E."/>
            <person name="Dreano S."/>
            <person name="Gloux S."/>
            <person name="Lelaure V."/>
            <person name="Mottier S."/>
            <person name="Galibert F."/>
            <person name="Aves S.J."/>
            <person name="Xiang Z."/>
            <person name="Hunt C."/>
            <person name="Moore K."/>
            <person name="Hurst S.M."/>
            <person name="Lucas M."/>
            <person name="Rochet M."/>
            <person name="Gaillardin C."/>
            <person name="Tallada V.A."/>
            <person name="Garzon A."/>
            <person name="Thode G."/>
            <person name="Daga R.R."/>
            <person name="Cruzado L."/>
            <person name="Jimenez J."/>
            <person name="Sanchez M."/>
            <person name="del Rey F."/>
            <person name="Benito J."/>
            <person name="Dominguez A."/>
            <person name="Revuelta J.L."/>
            <person name="Moreno S."/>
            <person name="Armstrong J."/>
            <person name="Forsburg S.L."/>
            <person name="Cerutti L."/>
            <person name="Lowe T."/>
            <person name="McCombie W.R."/>
            <person name="Paulsen I."/>
            <person name="Potashkin J."/>
            <person name="Shpakovski G.V."/>
            <person name="Ussery D."/>
            <person name="Barrell B.G."/>
            <person name="Nurse P."/>
        </authorList>
    </citation>
    <scope>NUCLEOTIDE SEQUENCE [LARGE SCALE GENOMIC DNA]</scope>
    <source>
        <strain>972 / ATCC 24843</strain>
    </source>
</reference>
<reference key="2">
    <citation type="journal article" date="2006" name="Nat. Biotechnol.">
        <title>ORFeome cloning and global analysis of protein localization in the fission yeast Schizosaccharomyces pombe.</title>
        <authorList>
            <person name="Matsuyama A."/>
            <person name="Arai R."/>
            <person name="Yashiroda Y."/>
            <person name="Shirai A."/>
            <person name="Kamata A."/>
            <person name="Sekido S."/>
            <person name="Kobayashi Y."/>
            <person name="Hashimoto A."/>
            <person name="Hamamoto M."/>
            <person name="Hiraoka Y."/>
            <person name="Horinouchi S."/>
            <person name="Yoshida M."/>
        </authorList>
    </citation>
    <scope>SUBCELLULAR LOCATION [LARGE SCALE ANALYSIS]</scope>
</reference>
<sequence length="510" mass="57644">MISKLLKIVLLTAGVIGNTLADSRIHEQYLVKAFPNEPVDYEGRMHAGHLNQTDQLDGDLFFWMFESVKPEYEHRSILWLNGGPGCSSEDGSLMEVGPFRLDDNNTFQLNPGRWDELGNLLFVDQPLGTGYSYSLAKDFQSNNEKMANDFSIFFEKFLEEFPERANDEWFIAGESFAGQYIPHIAAKLKEKNLVNLGGLAIGNGWINPLSHYETYLNYLVEKGMVDFESELGQYLHHSWAECLLAFDKIGSGSGDLSKCESFLGDILYMVSKEPGKACMNMYDISLESTYPTCGMDWPYDLSYLTEFLSTREAMTSLNVNLEKVHDWEECNDDVALQYAREGIESSSKLIQDLVSTVPILLFYGENDFLCNYLSGEKLTRSLEWNGAVGFQNQSAQPFYLPGYSDQPSGSYVSSRNLTFARIVEASHMVPYDHPNEMKTLITAFFNNDFASLPSVPKPSPDLGNGNYKWLYLGLIPVALTIIILFSIYLCRRFGLFGLSKQRYQPISPTP</sequence>
<keyword id="KW-0053">Apoptosis</keyword>
<keyword id="KW-0121">Carboxypeptidase</keyword>
<keyword id="KW-0325">Glycoprotein</keyword>
<keyword id="KW-0333">Golgi apparatus</keyword>
<keyword id="KW-0378">Hydrolase</keyword>
<keyword id="KW-0472">Membrane</keyword>
<keyword id="KW-0645">Protease</keyword>
<keyword id="KW-1185">Reference proteome</keyword>
<keyword id="KW-0732">Signal</keyword>
<keyword id="KW-0812">Transmembrane</keyword>
<keyword id="KW-1133">Transmembrane helix</keyword>
<keyword id="KW-0926">Vacuole</keyword>
<accession>O60123</accession>
<comment type="function">
    <text evidence="1">Protease with a carboxypeptidase B-like function involved in the C-terminal processing of the lysine and arginine residues from protein precursors. Promotes cell fusion and is involved in the programmed cell death (By similarity).</text>
</comment>
<comment type="catalytic activity">
    <reaction>
        <text>Preferential release of a C-terminal arginine or lysine residue.</text>
        <dbReference type="EC" id="3.4.16.6"/>
    </reaction>
</comment>
<comment type="subcellular location">
    <subcellularLocation>
        <location evidence="1">Golgi apparatus</location>
        <location evidence="1">trans-Golgi network membrane</location>
        <topology evidence="1">Single-pass type I membrane protein</topology>
    </subcellularLocation>
    <subcellularLocation>
        <location evidence="3">Vacuole membrane</location>
        <topology evidence="3">Single-pass type I membrane protein</topology>
    </subcellularLocation>
</comment>
<comment type="similarity">
    <text evidence="4">Belongs to the peptidase S10 family.</text>
</comment>
<protein>
    <recommendedName>
        <fullName>Pheromone-processing carboxypeptidase kex1</fullName>
        <ecNumber>3.4.16.6</ecNumber>
    </recommendedName>
    <alternativeName>
        <fullName>Carboxypeptidase D</fullName>
    </alternativeName>
</protein>
<proteinExistence type="inferred from homology"/>
<feature type="signal peptide" evidence="2">
    <location>
        <begin position="1"/>
        <end position="21"/>
    </location>
</feature>
<feature type="chain" id="PRO_0000314765" description="Pheromone-processing carboxypeptidase kex1">
    <location>
        <begin position="22"/>
        <end position="510"/>
    </location>
</feature>
<feature type="topological domain" description="Lumenal" evidence="2">
    <location>
        <begin position="22"/>
        <end position="468"/>
    </location>
</feature>
<feature type="transmembrane region" description="Helical" evidence="2">
    <location>
        <begin position="469"/>
        <end position="489"/>
    </location>
</feature>
<feature type="topological domain" description="Cytoplasmic" evidence="2">
    <location>
        <begin position="490"/>
        <end position="510"/>
    </location>
</feature>
<feature type="active site" evidence="1">
    <location>
        <position position="175"/>
    </location>
</feature>
<feature type="active site" evidence="1">
    <location>
        <position position="367"/>
    </location>
</feature>
<feature type="active site" evidence="1">
    <location>
        <position position="427"/>
    </location>
</feature>
<feature type="glycosylation site" description="N-linked (GlcNAc...) asparagine" evidence="2">
    <location>
        <position position="51"/>
    </location>
</feature>
<feature type="glycosylation site" description="N-linked (GlcNAc...) asparagine" evidence="2">
    <location>
        <position position="104"/>
    </location>
</feature>
<feature type="glycosylation site" description="N-linked (GlcNAc...) asparagine" evidence="2">
    <location>
        <position position="392"/>
    </location>
</feature>
<feature type="glycosylation site" description="N-linked (GlcNAc...) asparagine" evidence="2">
    <location>
        <position position="416"/>
    </location>
</feature>
<organism>
    <name type="scientific">Schizosaccharomyces pombe (strain 972 / ATCC 24843)</name>
    <name type="common">Fission yeast</name>
    <dbReference type="NCBI Taxonomy" id="284812"/>
    <lineage>
        <taxon>Eukaryota</taxon>
        <taxon>Fungi</taxon>
        <taxon>Dikarya</taxon>
        <taxon>Ascomycota</taxon>
        <taxon>Taphrinomycotina</taxon>
        <taxon>Schizosaccharomycetes</taxon>
        <taxon>Schizosaccharomycetales</taxon>
        <taxon>Schizosaccharomycetaceae</taxon>
        <taxon>Schizosaccharomyces</taxon>
    </lineage>
</organism>
<gene>
    <name type="primary">kex1</name>
    <name type="ORF">SPBC16G5.09</name>
</gene>
<evidence type="ECO:0000250" key="1"/>
<evidence type="ECO:0000255" key="2"/>
<evidence type="ECO:0000269" key="3">
    <source>
    </source>
</evidence>
<evidence type="ECO:0000305" key="4"/>
<name>KEX1_SCHPO</name>
<dbReference type="EC" id="3.4.16.6"/>
<dbReference type="EMBL" id="CU329671">
    <property type="protein sequence ID" value="CAA19029.1"/>
    <property type="molecule type" value="Genomic_DNA"/>
</dbReference>
<dbReference type="PIR" id="T39601">
    <property type="entry name" value="T39601"/>
</dbReference>
<dbReference type="RefSeq" id="NP_596758.1">
    <property type="nucleotide sequence ID" value="NM_001023778.2"/>
</dbReference>
<dbReference type="SMR" id="O60123"/>
<dbReference type="BioGRID" id="276735">
    <property type="interactions" value="6"/>
</dbReference>
<dbReference type="FunCoup" id="O60123">
    <property type="interactions" value="271"/>
</dbReference>
<dbReference type="STRING" id="284812.O60123"/>
<dbReference type="ESTHER" id="schpo-KEX1">
    <property type="family name" value="Carboxypeptidase_S10"/>
</dbReference>
<dbReference type="MEROPS" id="S10.A67"/>
<dbReference type="GlyCosmos" id="O60123">
    <property type="glycosylation" value="4 sites, No reported glycans"/>
</dbReference>
<dbReference type="iPTMnet" id="O60123"/>
<dbReference type="PaxDb" id="4896-SPBC16G5.09.1"/>
<dbReference type="EnsemblFungi" id="SPBC16G5.09.1">
    <property type="protein sequence ID" value="SPBC16G5.09.1:pep"/>
    <property type="gene ID" value="SPBC16G5.09"/>
</dbReference>
<dbReference type="GeneID" id="2540202"/>
<dbReference type="KEGG" id="spo:2540202"/>
<dbReference type="PomBase" id="SPBC16G5.09">
    <property type="gene designation" value="kex1"/>
</dbReference>
<dbReference type="VEuPathDB" id="FungiDB:SPBC16G5.09"/>
<dbReference type="eggNOG" id="KOG1282">
    <property type="taxonomic scope" value="Eukaryota"/>
</dbReference>
<dbReference type="HOGENOM" id="CLU_008523_11_3_1"/>
<dbReference type="InParanoid" id="O60123"/>
<dbReference type="OMA" id="EMADQFV"/>
<dbReference type="PhylomeDB" id="O60123"/>
<dbReference type="PRO" id="PR:O60123"/>
<dbReference type="Proteomes" id="UP000002485">
    <property type="component" value="Chromosome II"/>
</dbReference>
<dbReference type="GO" id="GO:0000324">
    <property type="term" value="C:fungal-type vacuole"/>
    <property type="evidence" value="ECO:0007005"/>
    <property type="project" value="PomBase"/>
</dbReference>
<dbReference type="GO" id="GO:0005802">
    <property type="term" value="C:trans-Golgi network"/>
    <property type="evidence" value="ECO:0000318"/>
    <property type="project" value="GO_Central"/>
</dbReference>
<dbReference type="GO" id="GO:0005774">
    <property type="term" value="C:vacuolar membrane"/>
    <property type="evidence" value="ECO:0007669"/>
    <property type="project" value="UniProtKB-SubCell"/>
</dbReference>
<dbReference type="GO" id="GO:0004185">
    <property type="term" value="F:serine-type carboxypeptidase activity"/>
    <property type="evidence" value="ECO:0000318"/>
    <property type="project" value="GO_Central"/>
</dbReference>
<dbReference type="GO" id="GO:0006508">
    <property type="term" value="P:proteolysis"/>
    <property type="evidence" value="ECO:0007669"/>
    <property type="project" value="UniProtKB-KW"/>
</dbReference>
<dbReference type="FunFam" id="3.40.50.1820:FF:000121">
    <property type="entry name" value="Carboxypeptidase D"/>
    <property type="match status" value="1"/>
</dbReference>
<dbReference type="Gene3D" id="3.40.50.1820">
    <property type="entry name" value="alpha/beta hydrolase"/>
    <property type="match status" value="1"/>
</dbReference>
<dbReference type="InterPro" id="IPR029058">
    <property type="entry name" value="AB_hydrolase_fold"/>
</dbReference>
<dbReference type="InterPro" id="IPR001563">
    <property type="entry name" value="Peptidase_S10"/>
</dbReference>
<dbReference type="PANTHER" id="PTHR11802:SF190">
    <property type="entry name" value="PHEROMONE-PROCESSING CARBOXYPEPTIDASE KEX1"/>
    <property type="match status" value="1"/>
</dbReference>
<dbReference type="PANTHER" id="PTHR11802">
    <property type="entry name" value="SERINE PROTEASE FAMILY S10 SERINE CARBOXYPEPTIDASE"/>
    <property type="match status" value="1"/>
</dbReference>
<dbReference type="Pfam" id="PF00450">
    <property type="entry name" value="Peptidase_S10"/>
    <property type="match status" value="1"/>
</dbReference>
<dbReference type="PRINTS" id="PR00724">
    <property type="entry name" value="CRBOXYPTASEC"/>
</dbReference>
<dbReference type="SUPFAM" id="SSF53474">
    <property type="entry name" value="alpha/beta-Hydrolases"/>
    <property type="match status" value="1"/>
</dbReference>